<name>AROQ_MARMS</name>
<protein>
    <recommendedName>
        <fullName evidence="1">3-dehydroquinate dehydratase</fullName>
        <shortName evidence="1">3-dehydroquinase</shortName>
        <ecNumber evidence="1">4.2.1.10</ecNumber>
    </recommendedName>
    <alternativeName>
        <fullName evidence="1">Type II DHQase</fullName>
    </alternativeName>
</protein>
<sequence length="150" mass="16033">MSTIMVLNGPNLNLLGTREPATYGYETLADVEVMCREAALSLGHEVECHQSNHEGVLIDLIHEAGRRIKAGEVLGVVFNPGAYTHTSVALHDAIKGAEVPVIEVHISNVHAREAFRHHSYISPAAAGIVVGMGVQGYVLGIQGLVHKLKA</sequence>
<comment type="function">
    <text evidence="1">Catalyzes a trans-dehydration via an enolate intermediate.</text>
</comment>
<comment type="catalytic activity">
    <reaction evidence="1">
        <text>3-dehydroquinate = 3-dehydroshikimate + H2O</text>
        <dbReference type="Rhea" id="RHEA:21096"/>
        <dbReference type="ChEBI" id="CHEBI:15377"/>
        <dbReference type="ChEBI" id="CHEBI:16630"/>
        <dbReference type="ChEBI" id="CHEBI:32364"/>
        <dbReference type="EC" id="4.2.1.10"/>
    </reaction>
</comment>
<comment type="pathway">
    <text evidence="1">Metabolic intermediate biosynthesis; chorismate biosynthesis; chorismate from D-erythrose 4-phosphate and phosphoenolpyruvate: step 3/7.</text>
</comment>
<comment type="subunit">
    <text evidence="1">Homododecamer.</text>
</comment>
<comment type="similarity">
    <text evidence="1">Belongs to the type-II 3-dehydroquinase family.</text>
</comment>
<evidence type="ECO:0000255" key="1">
    <source>
        <dbReference type="HAMAP-Rule" id="MF_00169"/>
    </source>
</evidence>
<proteinExistence type="inferred from homology"/>
<reference key="1">
    <citation type="submission" date="2007-06" db="EMBL/GenBank/DDBJ databases">
        <title>Complete sequence of Marinomonas sp. MWYL1.</title>
        <authorList>
            <consortium name="US DOE Joint Genome Institute"/>
            <person name="Copeland A."/>
            <person name="Lucas S."/>
            <person name="Lapidus A."/>
            <person name="Barry K."/>
            <person name="Glavina del Rio T."/>
            <person name="Dalin E."/>
            <person name="Tice H."/>
            <person name="Pitluck S."/>
            <person name="Kiss H."/>
            <person name="Brettin T."/>
            <person name="Bruce D."/>
            <person name="Detter J.C."/>
            <person name="Han C."/>
            <person name="Schmutz J."/>
            <person name="Larimer F."/>
            <person name="Land M."/>
            <person name="Hauser L."/>
            <person name="Kyrpides N."/>
            <person name="Kim E."/>
            <person name="Johnston A.W.B."/>
            <person name="Todd J.D."/>
            <person name="Rogers R."/>
            <person name="Wexler M."/>
            <person name="Bond P.L."/>
            <person name="Li Y."/>
            <person name="Richardson P."/>
        </authorList>
    </citation>
    <scope>NUCLEOTIDE SEQUENCE [LARGE SCALE GENOMIC DNA]</scope>
    <source>
        <strain>MWYL1</strain>
    </source>
</reference>
<organism>
    <name type="scientific">Marinomonas sp. (strain MWYL1)</name>
    <dbReference type="NCBI Taxonomy" id="400668"/>
    <lineage>
        <taxon>Bacteria</taxon>
        <taxon>Pseudomonadati</taxon>
        <taxon>Pseudomonadota</taxon>
        <taxon>Gammaproteobacteria</taxon>
        <taxon>Oceanospirillales</taxon>
        <taxon>Oceanospirillaceae</taxon>
        <taxon>Marinomonas</taxon>
    </lineage>
</organism>
<feature type="chain" id="PRO_1000077049" description="3-dehydroquinate dehydratase">
    <location>
        <begin position="1"/>
        <end position="150"/>
    </location>
</feature>
<feature type="active site" description="Proton acceptor" evidence="1">
    <location>
        <position position="23"/>
    </location>
</feature>
<feature type="active site" description="Proton donor" evidence="1">
    <location>
        <position position="105"/>
    </location>
</feature>
<feature type="binding site" evidence="1">
    <location>
        <position position="79"/>
    </location>
    <ligand>
        <name>substrate</name>
    </ligand>
</feature>
<feature type="binding site" evidence="1">
    <location>
        <position position="85"/>
    </location>
    <ligand>
        <name>substrate</name>
    </ligand>
</feature>
<feature type="binding site" evidence="1">
    <location>
        <position position="92"/>
    </location>
    <ligand>
        <name>substrate</name>
    </ligand>
</feature>
<feature type="binding site" evidence="1">
    <location>
        <begin position="106"/>
        <end position="107"/>
    </location>
    <ligand>
        <name>substrate</name>
    </ligand>
</feature>
<feature type="binding site" evidence="1">
    <location>
        <position position="116"/>
    </location>
    <ligand>
        <name>substrate</name>
    </ligand>
</feature>
<feature type="site" description="Transition state stabilizer" evidence="1">
    <location>
        <position position="18"/>
    </location>
</feature>
<keyword id="KW-0028">Amino-acid biosynthesis</keyword>
<keyword id="KW-0057">Aromatic amino acid biosynthesis</keyword>
<keyword id="KW-0456">Lyase</keyword>
<accession>A6W284</accession>
<dbReference type="EC" id="4.2.1.10" evidence="1"/>
<dbReference type="EMBL" id="CP000749">
    <property type="protein sequence ID" value="ABR72813.1"/>
    <property type="molecule type" value="Genomic_DNA"/>
</dbReference>
<dbReference type="SMR" id="A6W284"/>
<dbReference type="STRING" id="400668.Mmwyl1_3916"/>
<dbReference type="KEGG" id="mmw:Mmwyl1_3916"/>
<dbReference type="eggNOG" id="COG0757">
    <property type="taxonomic scope" value="Bacteria"/>
</dbReference>
<dbReference type="HOGENOM" id="CLU_090968_3_0_6"/>
<dbReference type="OrthoDB" id="9790793at2"/>
<dbReference type="UniPathway" id="UPA00053">
    <property type="reaction ID" value="UER00086"/>
</dbReference>
<dbReference type="GO" id="GO:0003855">
    <property type="term" value="F:3-dehydroquinate dehydratase activity"/>
    <property type="evidence" value="ECO:0007669"/>
    <property type="project" value="UniProtKB-UniRule"/>
</dbReference>
<dbReference type="GO" id="GO:0008652">
    <property type="term" value="P:amino acid biosynthetic process"/>
    <property type="evidence" value="ECO:0007669"/>
    <property type="project" value="UniProtKB-KW"/>
</dbReference>
<dbReference type="GO" id="GO:0009073">
    <property type="term" value="P:aromatic amino acid family biosynthetic process"/>
    <property type="evidence" value="ECO:0007669"/>
    <property type="project" value="UniProtKB-KW"/>
</dbReference>
<dbReference type="GO" id="GO:0009423">
    <property type="term" value="P:chorismate biosynthetic process"/>
    <property type="evidence" value="ECO:0007669"/>
    <property type="project" value="UniProtKB-UniRule"/>
</dbReference>
<dbReference type="GO" id="GO:0019631">
    <property type="term" value="P:quinate catabolic process"/>
    <property type="evidence" value="ECO:0007669"/>
    <property type="project" value="TreeGrafter"/>
</dbReference>
<dbReference type="CDD" id="cd00466">
    <property type="entry name" value="DHQase_II"/>
    <property type="match status" value="1"/>
</dbReference>
<dbReference type="Gene3D" id="3.40.50.9100">
    <property type="entry name" value="Dehydroquinase, class II"/>
    <property type="match status" value="1"/>
</dbReference>
<dbReference type="HAMAP" id="MF_00169">
    <property type="entry name" value="AroQ"/>
    <property type="match status" value="1"/>
</dbReference>
<dbReference type="InterPro" id="IPR001874">
    <property type="entry name" value="DHquinase_II"/>
</dbReference>
<dbReference type="InterPro" id="IPR018509">
    <property type="entry name" value="DHquinase_II_CS"/>
</dbReference>
<dbReference type="InterPro" id="IPR036441">
    <property type="entry name" value="DHquinase_II_sf"/>
</dbReference>
<dbReference type="NCBIfam" id="TIGR01088">
    <property type="entry name" value="aroQ"/>
    <property type="match status" value="1"/>
</dbReference>
<dbReference type="NCBIfam" id="NF003805">
    <property type="entry name" value="PRK05395.1-2"/>
    <property type="match status" value="1"/>
</dbReference>
<dbReference type="NCBIfam" id="NF003806">
    <property type="entry name" value="PRK05395.1-3"/>
    <property type="match status" value="1"/>
</dbReference>
<dbReference type="NCBIfam" id="NF003807">
    <property type="entry name" value="PRK05395.1-4"/>
    <property type="match status" value="1"/>
</dbReference>
<dbReference type="PANTHER" id="PTHR21272">
    <property type="entry name" value="CATABOLIC 3-DEHYDROQUINASE"/>
    <property type="match status" value="1"/>
</dbReference>
<dbReference type="PANTHER" id="PTHR21272:SF3">
    <property type="entry name" value="CATABOLIC 3-DEHYDROQUINASE"/>
    <property type="match status" value="1"/>
</dbReference>
<dbReference type="Pfam" id="PF01220">
    <property type="entry name" value="DHquinase_II"/>
    <property type="match status" value="1"/>
</dbReference>
<dbReference type="PIRSF" id="PIRSF001399">
    <property type="entry name" value="DHquinase_II"/>
    <property type="match status" value="1"/>
</dbReference>
<dbReference type="SUPFAM" id="SSF52304">
    <property type="entry name" value="Type II 3-dehydroquinate dehydratase"/>
    <property type="match status" value="1"/>
</dbReference>
<dbReference type="PROSITE" id="PS01029">
    <property type="entry name" value="DEHYDROQUINASE_II"/>
    <property type="match status" value="1"/>
</dbReference>
<gene>
    <name evidence="1" type="primary">aroQ</name>
    <name type="ordered locus">Mmwyl1_3916</name>
</gene>